<name>PHNW_VIBPA</name>
<reference key="1">
    <citation type="journal article" date="2003" name="Lancet">
        <title>Genome sequence of Vibrio parahaemolyticus: a pathogenic mechanism distinct from that of V. cholerae.</title>
        <authorList>
            <person name="Makino K."/>
            <person name="Oshima K."/>
            <person name="Kurokawa K."/>
            <person name="Yokoyama K."/>
            <person name="Uda T."/>
            <person name="Tagomori K."/>
            <person name="Iijima Y."/>
            <person name="Najima M."/>
            <person name="Nakano M."/>
            <person name="Yamashita A."/>
            <person name="Kubota Y."/>
            <person name="Kimura S."/>
            <person name="Yasunaga T."/>
            <person name="Honda T."/>
            <person name="Shinagawa H."/>
            <person name="Hattori M."/>
            <person name="Iida T."/>
        </authorList>
    </citation>
    <scope>NUCLEOTIDE SEQUENCE [LARGE SCALE GENOMIC DNA]</scope>
    <source>
        <strain>RIMD 2210633</strain>
    </source>
</reference>
<proteinExistence type="inferred from homology"/>
<gene>
    <name evidence="1" type="primary">phnW</name>
    <name type="ordered locus">VPA0235</name>
</gene>
<keyword id="KW-0032">Aminotransferase</keyword>
<keyword id="KW-0663">Pyridoxal phosphate</keyword>
<keyword id="KW-0670">Pyruvate</keyword>
<keyword id="KW-0808">Transferase</keyword>
<sequence length="367" mass="40448">MKNEYLLLTPGPLSTSETVREAMLKDWCTWDDEYNKDIVEVIRTKLVKLATKHSGYTSVLMQGCGTASVEATIGSAIGKEGKLLVVDNGAYGARIAQIADYLNIPCHVVSPGETSQPHLNEVETALASDPAITHVAIVHCETTTGMLNPIEAFASAAKAHGKVVILDAMSSFGGIPMDIADLGIDFMISSANKCIQGVPGFGFVIAKQTELEKCQDQARSLSLDLYDQWHCMEVNHGKWRFTSPTHTVRAFYQALLELEQEGGIEARHNRYQTNQKTLVAGMRSLGFEPLLSDDLHSPIITSFYSPTHSDYQFKAFYTRLKEQGFVIYPGKVSNADCFRIGNIGEVYPADIERLIGAIEKAMYWQVA</sequence>
<protein>
    <recommendedName>
        <fullName evidence="1">2-aminoethylphosphonate--pyruvate transaminase</fullName>
        <ecNumber evidence="1">2.6.1.37</ecNumber>
    </recommendedName>
    <alternativeName>
        <fullName evidence="1">2-aminoethylphosphonate aminotransferase</fullName>
    </alternativeName>
    <alternativeName>
        <fullName evidence="1">AEP transaminase</fullName>
        <shortName evidence="1">AEPT</shortName>
    </alternativeName>
</protein>
<organism>
    <name type="scientific">Vibrio parahaemolyticus serotype O3:K6 (strain RIMD 2210633)</name>
    <dbReference type="NCBI Taxonomy" id="223926"/>
    <lineage>
        <taxon>Bacteria</taxon>
        <taxon>Pseudomonadati</taxon>
        <taxon>Pseudomonadota</taxon>
        <taxon>Gammaproteobacteria</taxon>
        <taxon>Vibrionales</taxon>
        <taxon>Vibrionaceae</taxon>
        <taxon>Vibrio</taxon>
    </lineage>
</organism>
<evidence type="ECO:0000255" key="1">
    <source>
        <dbReference type="HAMAP-Rule" id="MF_01376"/>
    </source>
</evidence>
<dbReference type="EC" id="2.6.1.37" evidence="1"/>
<dbReference type="EMBL" id="BA000032">
    <property type="protein sequence ID" value="BAC61578.1"/>
    <property type="molecule type" value="Genomic_DNA"/>
</dbReference>
<dbReference type="RefSeq" id="NP_799745.1">
    <property type="nucleotide sequence ID" value="NC_004605.1"/>
</dbReference>
<dbReference type="RefSeq" id="WP_005481450.1">
    <property type="nucleotide sequence ID" value="NC_004605.1"/>
</dbReference>
<dbReference type="SMR" id="Q87JL4"/>
<dbReference type="GeneID" id="1190923"/>
<dbReference type="KEGG" id="vpa:VPA0235"/>
<dbReference type="PATRIC" id="fig|223926.6.peg.3190"/>
<dbReference type="eggNOG" id="COG0075">
    <property type="taxonomic scope" value="Bacteria"/>
</dbReference>
<dbReference type="HOGENOM" id="CLU_027686_3_1_6"/>
<dbReference type="Proteomes" id="UP000002493">
    <property type="component" value="Chromosome 2"/>
</dbReference>
<dbReference type="GO" id="GO:0047304">
    <property type="term" value="F:2-aminoethylphosphonate-pyruvate transaminase activity"/>
    <property type="evidence" value="ECO:0007669"/>
    <property type="project" value="UniProtKB-UniRule"/>
</dbReference>
<dbReference type="GO" id="GO:0019700">
    <property type="term" value="P:organic phosphonate catabolic process"/>
    <property type="evidence" value="ECO:0007669"/>
    <property type="project" value="InterPro"/>
</dbReference>
<dbReference type="FunFam" id="3.40.640.10:FF:000183">
    <property type="entry name" value="2-aminoethylphosphonate--pyruvate transaminase"/>
    <property type="match status" value="1"/>
</dbReference>
<dbReference type="Gene3D" id="3.90.1150.10">
    <property type="entry name" value="Aspartate Aminotransferase, domain 1"/>
    <property type="match status" value="1"/>
</dbReference>
<dbReference type="Gene3D" id="3.40.640.10">
    <property type="entry name" value="Type I PLP-dependent aspartate aminotransferase-like (Major domain)"/>
    <property type="match status" value="1"/>
</dbReference>
<dbReference type="HAMAP" id="MF_01376">
    <property type="entry name" value="PhnW_aminotrans_5"/>
    <property type="match status" value="1"/>
</dbReference>
<dbReference type="InterPro" id="IPR000192">
    <property type="entry name" value="Aminotrans_V_dom"/>
</dbReference>
<dbReference type="InterPro" id="IPR012703">
    <property type="entry name" value="NH2EtPonate_pyrv_transaminase"/>
</dbReference>
<dbReference type="InterPro" id="IPR015424">
    <property type="entry name" value="PyrdxlP-dep_Trfase"/>
</dbReference>
<dbReference type="InterPro" id="IPR015421">
    <property type="entry name" value="PyrdxlP-dep_Trfase_major"/>
</dbReference>
<dbReference type="InterPro" id="IPR015422">
    <property type="entry name" value="PyrdxlP-dep_Trfase_small"/>
</dbReference>
<dbReference type="InterPro" id="IPR024169">
    <property type="entry name" value="SP_NH2Trfase/AEP_transaminase"/>
</dbReference>
<dbReference type="NCBIfam" id="TIGR03301">
    <property type="entry name" value="PhnW-AepZ"/>
    <property type="match status" value="1"/>
</dbReference>
<dbReference type="NCBIfam" id="NF010006">
    <property type="entry name" value="PRK13479.1"/>
    <property type="match status" value="1"/>
</dbReference>
<dbReference type="NCBIfam" id="TIGR02326">
    <property type="entry name" value="transamin_PhnW"/>
    <property type="match status" value="1"/>
</dbReference>
<dbReference type="PANTHER" id="PTHR42778">
    <property type="entry name" value="2-AMINOETHYLPHOSPHONATE--PYRUVATE TRANSAMINASE"/>
    <property type="match status" value="1"/>
</dbReference>
<dbReference type="PANTHER" id="PTHR42778:SF1">
    <property type="entry name" value="2-AMINOETHYLPHOSPHONATE--PYRUVATE TRANSAMINASE"/>
    <property type="match status" value="1"/>
</dbReference>
<dbReference type="Pfam" id="PF00266">
    <property type="entry name" value="Aminotran_5"/>
    <property type="match status" value="1"/>
</dbReference>
<dbReference type="PIRSF" id="PIRSF000524">
    <property type="entry name" value="SPT"/>
    <property type="match status" value="1"/>
</dbReference>
<dbReference type="SUPFAM" id="SSF53383">
    <property type="entry name" value="PLP-dependent transferases"/>
    <property type="match status" value="1"/>
</dbReference>
<accession>Q87JL4</accession>
<comment type="function">
    <text evidence="1">Involved in phosphonate degradation.</text>
</comment>
<comment type="catalytic activity">
    <reaction evidence="1">
        <text>(2-aminoethyl)phosphonate + pyruvate = phosphonoacetaldehyde + L-alanine</text>
        <dbReference type="Rhea" id="RHEA:17021"/>
        <dbReference type="ChEBI" id="CHEBI:15361"/>
        <dbReference type="ChEBI" id="CHEBI:57418"/>
        <dbReference type="ChEBI" id="CHEBI:57972"/>
        <dbReference type="ChEBI" id="CHEBI:58383"/>
        <dbReference type="EC" id="2.6.1.37"/>
    </reaction>
</comment>
<comment type="cofactor">
    <cofactor evidence="1">
        <name>pyridoxal 5'-phosphate</name>
        <dbReference type="ChEBI" id="CHEBI:597326"/>
    </cofactor>
</comment>
<comment type="subunit">
    <text evidence="1">Homodimer.</text>
</comment>
<comment type="similarity">
    <text evidence="1">Belongs to the class-V pyridoxal-phosphate-dependent aminotransferase family. PhnW subfamily.</text>
</comment>
<feature type="chain" id="PRO_0000286790" description="2-aminoethylphosphonate--pyruvate transaminase">
    <location>
        <begin position="1"/>
        <end position="367"/>
    </location>
</feature>
<feature type="modified residue" description="N6-(pyridoxal phosphate)lysine" evidence="1">
    <location>
        <position position="193"/>
    </location>
</feature>